<organism>
    <name type="scientific">Homo sapiens</name>
    <name type="common">Human</name>
    <dbReference type="NCBI Taxonomy" id="9606"/>
    <lineage>
        <taxon>Eukaryota</taxon>
        <taxon>Metazoa</taxon>
        <taxon>Chordata</taxon>
        <taxon>Craniata</taxon>
        <taxon>Vertebrata</taxon>
        <taxon>Euteleostomi</taxon>
        <taxon>Mammalia</taxon>
        <taxon>Eutheria</taxon>
        <taxon>Euarchontoglires</taxon>
        <taxon>Primates</taxon>
        <taxon>Haplorrhini</taxon>
        <taxon>Catarrhini</taxon>
        <taxon>Hominidae</taxon>
        <taxon>Homo</taxon>
    </lineage>
</organism>
<accession>P58511</accession>
<gene>
    <name evidence="3" type="primary">SMIM11</name>
    <name evidence="3" type="synonym">C21orf51</name>
    <name evidence="3" type="synonym">FAM165B</name>
    <name evidence="3" type="synonym">SMIM11A</name>
</gene>
<proteinExistence type="evidence at protein level"/>
<protein>
    <recommendedName>
        <fullName evidence="3">Small integral membrane protein 11</fullName>
    </recommendedName>
</protein>
<sequence>MNWKVLEHVPLLLYILAAKTLILCLTFAGVKMYQRKRLEAKQQKLEAERKKQSEKKDN</sequence>
<reference key="1">
    <citation type="journal article" date="2001" name="Genomics">
        <title>From PREDs and open reading frames to cDNA isolation: revisiting the human chromosome 21 transcription map.</title>
        <authorList>
            <person name="Reymond A."/>
            <person name="Friedli M."/>
            <person name="Neergaard Henrichsen C."/>
            <person name="Chapot F."/>
            <person name="Deutsch S."/>
            <person name="Ucla C."/>
            <person name="Rossier C."/>
            <person name="Lyle R."/>
            <person name="Guipponi M."/>
            <person name="Antonarakis S.E."/>
        </authorList>
    </citation>
    <scope>NUCLEOTIDE SEQUENCE [MRNA]</scope>
</reference>
<reference key="2">
    <citation type="journal article" date="2002" name="Genomics">
        <title>Annotation of human chromosome 21 for relevance to Down syndrome: gene structure and expression analysis.</title>
        <authorList>
            <person name="Gardiner K."/>
            <person name="Slavov D."/>
            <person name="Bechtel L."/>
            <person name="Davisson M."/>
        </authorList>
    </citation>
    <scope>NUCLEOTIDE SEQUENCE [MRNA]</scope>
</reference>
<reference key="3">
    <citation type="journal article" date="2000" name="Nature">
        <title>The DNA sequence of human chromosome 21.</title>
        <authorList>
            <person name="Hattori M."/>
            <person name="Fujiyama A."/>
            <person name="Taylor T.D."/>
            <person name="Watanabe H."/>
            <person name="Yada T."/>
            <person name="Park H.-S."/>
            <person name="Toyoda A."/>
            <person name="Ishii K."/>
            <person name="Totoki Y."/>
            <person name="Choi D.-K."/>
            <person name="Groner Y."/>
            <person name="Soeda E."/>
            <person name="Ohki M."/>
            <person name="Takagi T."/>
            <person name="Sakaki Y."/>
            <person name="Taudien S."/>
            <person name="Blechschmidt K."/>
            <person name="Polley A."/>
            <person name="Menzel U."/>
            <person name="Delabar J."/>
            <person name="Kumpf K."/>
            <person name="Lehmann R."/>
            <person name="Patterson D."/>
            <person name="Reichwald K."/>
            <person name="Rump A."/>
            <person name="Schillhabel M."/>
            <person name="Schudy A."/>
            <person name="Zimmermann W."/>
            <person name="Rosenthal A."/>
            <person name="Kudoh J."/>
            <person name="Shibuya K."/>
            <person name="Kawasaki K."/>
            <person name="Asakawa S."/>
            <person name="Shintani A."/>
            <person name="Sasaki T."/>
            <person name="Nagamine K."/>
            <person name="Mitsuyama S."/>
            <person name="Antonarakis S.E."/>
            <person name="Minoshima S."/>
            <person name="Shimizu N."/>
            <person name="Nordsiek G."/>
            <person name="Hornischer K."/>
            <person name="Brandt P."/>
            <person name="Scharfe M."/>
            <person name="Schoen O."/>
            <person name="Desario A."/>
            <person name="Reichelt J."/>
            <person name="Kauer G."/>
            <person name="Bloecker H."/>
            <person name="Ramser J."/>
            <person name="Beck A."/>
            <person name="Klages S."/>
            <person name="Hennig S."/>
            <person name="Riesselmann L."/>
            <person name="Dagand E."/>
            <person name="Wehrmeyer S."/>
            <person name="Borzym K."/>
            <person name="Gardiner K."/>
            <person name="Nizetic D."/>
            <person name="Francis F."/>
            <person name="Lehrach H."/>
            <person name="Reinhardt R."/>
            <person name="Yaspo M.-L."/>
        </authorList>
    </citation>
    <scope>NUCLEOTIDE SEQUENCE [LARGE SCALE GENOMIC DNA]</scope>
</reference>
<reference key="4">
    <citation type="journal article" date="2004" name="Genome Res.">
        <title>The status, quality, and expansion of the NIH full-length cDNA project: the Mammalian Gene Collection (MGC).</title>
        <authorList>
            <consortium name="The MGC Project Team"/>
        </authorList>
    </citation>
    <scope>NUCLEOTIDE SEQUENCE [LARGE SCALE MRNA]</scope>
    <source>
        <tissue>Eye</tissue>
    </source>
</reference>
<evidence type="ECO:0000255" key="1"/>
<evidence type="ECO:0000305" key="2"/>
<evidence type="ECO:0000312" key="3">
    <source>
        <dbReference type="HGNC" id="HGNC:1293"/>
    </source>
</evidence>
<name>SIM11_HUMAN</name>
<keyword id="KW-0175">Coiled coil</keyword>
<keyword id="KW-0472">Membrane</keyword>
<keyword id="KW-1267">Proteomics identification</keyword>
<keyword id="KW-1185">Reference proteome</keyword>
<keyword id="KW-0812">Transmembrane</keyword>
<keyword id="KW-1133">Transmembrane helix</keyword>
<feature type="chain" id="PRO_0000079517" description="Small integral membrane protein 11">
    <location>
        <begin position="1"/>
        <end position="58"/>
    </location>
</feature>
<feature type="transmembrane region" description="Helical" evidence="1">
    <location>
        <begin position="10"/>
        <end position="32"/>
    </location>
</feature>
<feature type="coiled-coil region" evidence="1">
    <location>
        <begin position="29"/>
        <end position="58"/>
    </location>
</feature>
<feature type="sequence variant" id="VAR_054066" description="In dbSNP:rs34016792.">
    <original>K</original>
    <variation>R</variation>
    <location>
        <position position="51"/>
    </location>
</feature>
<comment type="interaction">
    <interactant intactId="EBI-1051936">
        <id>P58511</id>
    </interactant>
    <interactant intactId="EBI-12092171">
        <id>Q12797-6</id>
        <label>ASPH</label>
    </interactant>
    <organismsDiffer>false</organismsDiffer>
    <experiments>3</experiments>
</comment>
<comment type="interaction">
    <interactant intactId="EBI-1051936">
        <id>P58511</id>
    </interactant>
    <interactant intactId="EBI-2622997">
        <id>Q9HA82</id>
        <label>CERS4</label>
    </interactant>
    <organismsDiffer>false</organismsDiffer>
    <experiments>3</experiments>
</comment>
<comment type="interaction">
    <interactant intactId="EBI-1051936">
        <id>P58511</id>
    </interactant>
    <interactant intactId="EBI-947187">
        <id>Q9UHD9</id>
        <label>UBQLN2</label>
    </interactant>
    <organismsDiffer>false</organismsDiffer>
    <experiments>3</experiments>
</comment>
<comment type="subcellular location">
    <subcellularLocation>
        <location evidence="2">Membrane</location>
        <topology evidence="2">Single-pass membrane protein</topology>
    </subcellularLocation>
</comment>
<comment type="tissue specificity">
    <text>Expressed in heart, spleen, liver, stomach, muscle, lung, testis, skin, PBL and bone marrow.</text>
</comment>
<dbReference type="EMBL" id="AY033902">
    <property type="protein sequence ID" value="AAK68720.1"/>
    <property type="molecule type" value="mRNA"/>
</dbReference>
<dbReference type="EMBL" id="AY081144">
    <property type="protein sequence ID" value="AAL91138.1"/>
    <property type="molecule type" value="mRNA"/>
</dbReference>
<dbReference type="EMBL" id="AP000320">
    <property type="status" value="NOT_ANNOTATED_CDS"/>
    <property type="molecule type" value="Genomic_DNA"/>
</dbReference>
<dbReference type="EMBL" id="AP000321">
    <property type="status" value="NOT_ANNOTATED_CDS"/>
    <property type="molecule type" value="Genomic_DNA"/>
</dbReference>
<dbReference type="EMBL" id="AP000322">
    <property type="status" value="NOT_ANNOTATED_CDS"/>
    <property type="molecule type" value="Genomic_DNA"/>
</dbReference>
<dbReference type="EMBL" id="BC015596">
    <property type="protein sequence ID" value="AAH15596.1"/>
    <property type="molecule type" value="mRNA"/>
</dbReference>
<dbReference type="CCDS" id="CCDS33550.1"/>
<dbReference type="RefSeq" id="NP_001363828.1">
    <property type="nucleotide sequence ID" value="NM_001376899.1"/>
</dbReference>
<dbReference type="RefSeq" id="NP_478062.1">
    <property type="nucleotide sequence ID" value="NM_058182.5"/>
</dbReference>
<dbReference type="RefSeq" id="XP_016883692.1">
    <property type="nucleotide sequence ID" value="XM_017028203.1"/>
</dbReference>
<dbReference type="RefSeq" id="XP_016883693.1">
    <property type="nucleotide sequence ID" value="XM_017028204.1"/>
</dbReference>
<dbReference type="RefSeq" id="XP_016883886.1">
    <property type="nucleotide sequence ID" value="XM_017028397.1"/>
</dbReference>
<dbReference type="RefSeq" id="XP_016883887.1">
    <property type="nucleotide sequence ID" value="XM_017028398.1"/>
</dbReference>
<dbReference type="RefSeq" id="XP_016883888.1">
    <property type="nucleotide sequence ID" value="XM_017028399.1"/>
</dbReference>
<dbReference type="SMR" id="P58511"/>
<dbReference type="BioGRID" id="119872">
    <property type="interactions" value="19"/>
</dbReference>
<dbReference type="FunCoup" id="P58511">
    <property type="interactions" value="1"/>
</dbReference>
<dbReference type="IntAct" id="P58511">
    <property type="interactions" value="13"/>
</dbReference>
<dbReference type="STRING" id="9606.ENSP00000485484"/>
<dbReference type="iPTMnet" id="P58511"/>
<dbReference type="PhosphoSitePlus" id="P58511"/>
<dbReference type="BioMuta" id="SMIM11A"/>
<dbReference type="jPOST" id="P58511"/>
<dbReference type="MassIVE" id="P58511"/>
<dbReference type="PaxDb" id="9606-ENSP00000382234"/>
<dbReference type="PeptideAtlas" id="P58511"/>
<dbReference type="ProteomicsDB" id="57082"/>
<dbReference type="Pumba" id="P58511"/>
<dbReference type="TopDownProteomics" id="P58511"/>
<dbReference type="Antibodypedia" id="68567">
    <property type="antibodies" value="3 antibodies from 3 providers"/>
</dbReference>
<dbReference type="DNASU" id="54065"/>
<dbReference type="Ensembl" id="ENST00000399292.8">
    <property type="protein sequence ID" value="ENSP00000382231.4"/>
    <property type="gene ID" value="ENSG00000205670.12"/>
</dbReference>
<dbReference type="Ensembl" id="ENST00000399295.2">
    <property type="protein sequence ID" value="ENSP00000382234.2"/>
    <property type="gene ID" value="ENSG00000205670.12"/>
</dbReference>
<dbReference type="Ensembl" id="ENST00000474455.1">
    <property type="protein sequence ID" value="ENSP00000498771.1"/>
    <property type="gene ID" value="ENSG00000205670.12"/>
</dbReference>
<dbReference type="Ensembl" id="ENST00000652570.1">
    <property type="protein sequence ID" value="ENSP00000499160.1"/>
    <property type="gene ID" value="ENSG00000205670.12"/>
</dbReference>
<dbReference type="GeneID" id="54065"/>
<dbReference type="KEGG" id="hsa:102723553"/>
<dbReference type="KEGG" id="hsa:54065"/>
<dbReference type="MANE-Select" id="ENST00000399292.8">
    <property type="protein sequence ID" value="ENSP00000382231.4"/>
    <property type="RefSeq nucleotide sequence ID" value="NM_058182.5"/>
    <property type="RefSeq protein sequence ID" value="NP_478062.1"/>
</dbReference>
<dbReference type="UCSC" id="uc002ytu.5">
    <property type="organism name" value="human"/>
</dbReference>
<dbReference type="AGR" id="HGNC:1293"/>
<dbReference type="CTD" id="54065"/>
<dbReference type="GeneCards" id="SMIM11"/>
<dbReference type="HGNC" id="HGNC:1293">
    <property type="gene designation" value="SMIM11"/>
</dbReference>
<dbReference type="HPA" id="ENSG00000205670">
    <property type="expression patterns" value="Low tissue specificity"/>
</dbReference>
<dbReference type="neXtProt" id="NX_P58511"/>
<dbReference type="VEuPathDB" id="HostDB:ENSG00000205670"/>
<dbReference type="eggNOG" id="ENOG502SFJD">
    <property type="taxonomic scope" value="Eukaryota"/>
</dbReference>
<dbReference type="GeneTree" id="ENSGT00640000091610"/>
<dbReference type="HOGENOM" id="CLU_196183_0_0_1"/>
<dbReference type="InParanoid" id="P58511"/>
<dbReference type="OMA" id="KMWQRKR"/>
<dbReference type="PAN-GO" id="P58511">
    <property type="GO annotations" value="0 GO annotations based on evolutionary models"/>
</dbReference>
<dbReference type="PhylomeDB" id="P58511"/>
<dbReference type="TreeFam" id="TF330784"/>
<dbReference type="PathwayCommons" id="P58511"/>
<dbReference type="SignaLink" id="P58511"/>
<dbReference type="BioGRID-ORCS" id="102723553">
    <property type="hits" value="0 hits in 14 CRISPR screens"/>
</dbReference>
<dbReference type="BioGRID-ORCS" id="54065">
    <property type="hits" value="11 hits in 779 CRISPR screens"/>
</dbReference>
<dbReference type="ChiTaRS" id="SMIM11A">
    <property type="organism name" value="human"/>
</dbReference>
<dbReference type="Pharos" id="P58511">
    <property type="development level" value="Tdark"/>
</dbReference>
<dbReference type="PRO" id="PR:P58511"/>
<dbReference type="Proteomes" id="UP000005640">
    <property type="component" value="Chromosome 21"/>
</dbReference>
<dbReference type="RNAct" id="P58511">
    <property type="molecule type" value="protein"/>
</dbReference>
<dbReference type="Bgee" id="ENSG00000205670">
    <property type="expression patterns" value="Expressed in body of stomach and 101 other cell types or tissues"/>
</dbReference>
<dbReference type="GO" id="GO:0016020">
    <property type="term" value="C:membrane"/>
    <property type="evidence" value="ECO:0007669"/>
    <property type="project" value="UniProtKB-SubCell"/>
</dbReference>
<dbReference type="InterPro" id="IPR042125">
    <property type="entry name" value="SMIM11"/>
</dbReference>
<dbReference type="PANTHER" id="PTHR35975:SF1">
    <property type="entry name" value="SMALL INTEGRAL MEMBRANE PROTEIN 11"/>
    <property type="match status" value="1"/>
</dbReference>
<dbReference type="PANTHER" id="PTHR35975">
    <property type="entry name" value="SMALL INTEGRAL MEMBRANE PROTEIN 11A"/>
    <property type="match status" value="1"/>
</dbReference>
<dbReference type="Pfam" id="PF14981">
    <property type="entry name" value="FAM165"/>
    <property type="match status" value="1"/>
</dbReference>